<keyword id="KW-0378">Hydrolase</keyword>
<keyword id="KW-0479">Metal-binding</keyword>
<keyword id="KW-0546">Nucleotide metabolism</keyword>
<keyword id="KW-0862">Zinc</keyword>
<proteinExistence type="inferred from homology"/>
<sequence>MIDTTLPLTDIHRHLDGNIRPQTILELGRQYNISLPAQSLETLIPHVQVIANEPDLVSFLTKLDWGVKVLASLDACRRVAFENIEDAARNGLHYVELRFSPGYMAMAHQLPVAGVVEAVIDGVREGCRTFGVQAKLIGIMSRTFGEAACQQELEAFLAHRDQITALDLAGDELGFPGSLFLSHFNRARDAGWHITVHAGEAAGPESIWQAIRELGAERIGHGVKAIEDRALMDFLAEQQIGIESCLTSNIQTSTVADLAAHPLKTFLEHGIRASINTDDPGVQGVDIIHEYTVAAPAAGLSREQIRQAQINGLEMAFLSAEEKRALREKVAAK</sequence>
<protein>
    <recommendedName>
        <fullName evidence="1">Adenosine deaminase</fullName>
        <ecNumber evidence="1">3.5.4.4</ecNumber>
    </recommendedName>
    <alternativeName>
        <fullName evidence="1">Adenosine aminohydrolase</fullName>
    </alternativeName>
</protein>
<dbReference type="EC" id="3.5.4.4" evidence="1"/>
<dbReference type="EMBL" id="CP000243">
    <property type="protein sequence ID" value="ABE07289.1"/>
    <property type="molecule type" value="Genomic_DNA"/>
</dbReference>
<dbReference type="RefSeq" id="WP_000567511.1">
    <property type="nucleotide sequence ID" value="NZ_CP064825.1"/>
</dbReference>
<dbReference type="SMR" id="Q1RBH5"/>
<dbReference type="KEGG" id="eci:UTI89_C1811"/>
<dbReference type="HOGENOM" id="CLU_039228_0_2_6"/>
<dbReference type="Proteomes" id="UP000001952">
    <property type="component" value="Chromosome"/>
</dbReference>
<dbReference type="GO" id="GO:0005829">
    <property type="term" value="C:cytosol"/>
    <property type="evidence" value="ECO:0007669"/>
    <property type="project" value="TreeGrafter"/>
</dbReference>
<dbReference type="GO" id="GO:0046936">
    <property type="term" value="F:2'-deoxyadenosine deaminase activity"/>
    <property type="evidence" value="ECO:0007669"/>
    <property type="project" value="RHEA"/>
</dbReference>
<dbReference type="GO" id="GO:0004000">
    <property type="term" value="F:adenosine deaminase activity"/>
    <property type="evidence" value="ECO:0007669"/>
    <property type="project" value="UniProtKB-UniRule"/>
</dbReference>
<dbReference type="GO" id="GO:0008270">
    <property type="term" value="F:zinc ion binding"/>
    <property type="evidence" value="ECO:0007669"/>
    <property type="project" value="UniProtKB-UniRule"/>
</dbReference>
<dbReference type="GO" id="GO:0006154">
    <property type="term" value="P:adenosine catabolic process"/>
    <property type="evidence" value="ECO:0007669"/>
    <property type="project" value="TreeGrafter"/>
</dbReference>
<dbReference type="GO" id="GO:0043103">
    <property type="term" value="P:hypoxanthine salvage"/>
    <property type="evidence" value="ECO:0007669"/>
    <property type="project" value="TreeGrafter"/>
</dbReference>
<dbReference type="GO" id="GO:0046103">
    <property type="term" value="P:inosine biosynthetic process"/>
    <property type="evidence" value="ECO:0007669"/>
    <property type="project" value="TreeGrafter"/>
</dbReference>
<dbReference type="GO" id="GO:0009117">
    <property type="term" value="P:nucleotide metabolic process"/>
    <property type="evidence" value="ECO:0007669"/>
    <property type="project" value="UniProtKB-KW"/>
</dbReference>
<dbReference type="GO" id="GO:0009168">
    <property type="term" value="P:purine ribonucleoside monophosphate biosynthetic process"/>
    <property type="evidence" value="ECO:0007669"/>
    <property type="project" value="UniProtKB-UniRule"/>
</dbReference>
<dbReference type="CDD" id="cd01320">
    <property type="entry name" value="ADA"/>
    <property type="match status" value="1"/>
</dbReference>
<dbReference type="FunFam" id="3.20.20.140:FF:000009">
    <property type="entry name" value="Adenosine deaminase"/>
    <property type="match status" value="1"/>
</dbReference>
<dbReference type="Gene3D" id="3.20.20.140">
    <property type="entry name" value="Metal-dependent hydrolases"/>
    <property type="match status" value="1"/>
</dbReference>
<dbReference type="HAMAP" id="MF_00540">
    <property type="entry name" value="A_deaminase"/>
    <property type="match status" value="1"/>
</dbReference>
<dbReference type="InterPro" id="IPR006650">
    <property type="entry name" value="A/AMP_deam_AS"/>
</dbReference>
<dbReference type="InterPro" id="IPR028893">
    <property type="entry name" value="A_deaminase"/>
</dbReference>
<dbReference type="InterPro" id="IPR001365">
    <property type="entry name" value="A_deaminase_dom"/>
</dbReference>
<dbReference type="InterPro" id="IPR006330">
    <property type="entry name" value="Ado/ade_deaminase"/>
</dbReference>
<dbReference type="InterPro" id="IPR032466">
    <property type="entry name" value="Metal_Hydrolase"/>
</dbReference>
<dbReference type="NCBIfam" id="TIGR01430">
    <property type="entry name" value="aden_deam"/>
    <property type="match status" value="1"/>
</dbReference>
<dbReference type="NCBIfam" id="NF006846">
    <property type="entry name" value="PRK09358.1-1"/>
    <property type="match status" value="1"/>
</dbReference>
<dbReference type="PANTHER" id="PTHR11409">
    <property type="entry name" value="ADENOSINE DEAMINASE"/>
    <property type="match status" value="1"/>
</dbReference>
<dbReference type="PANTHER" id="PTHR11409:SF43">
    <property type="entry name" value="ADENOSINE DEAMINASE"/>
    <property type="match status" value="1"/>
</dbReference>
<dbReference type="Pfam" id="PF00962">
    <property type="entry name" value="A_deaminase"/>
    <property type="match status" value="1"/>
</dbReference>
<dbReference type="SUPFAM" id="SSF51556">
    <property type="entry name" value="Metallo-dependent hydrolases"/>
    <property type="match status" value="1"/>
</dbReference>
<dbReference type="PROSITE" id="PS00485">
    <property type="entry name" value="A_DEAMINASE"/>
    <property type="match status" value="1"/>
</dbReference>
<accession>Q1RBH5</accession>
<organism>
    <name type="scientific">Escherichia coli (strain UTI89 / UPEC)</name>
    <dbReference type="NCBI Taxonomy" id="364106"/>
    <lineage>
        <taxon>Bacteria</taxon>
        <taxon>Pseudomonadati</taxon>
        <taxon>Pseudomonadota</taxon>
        <taxon>Gammaproteobacteria</taxon>
        <taxon>Enterobacterales</taxon>
        <taxon>Enterobacteriaceae</taxon>
        <taxon>Escherichia</taxon>
    </lineage>
</organism>
<comment type="function">
    <text evidence="1">Catalyzes the hydrolytic deamination of adenosine and 2-deoxyadenosine.</text>
</comment>
<comment type="catalytic activity">
    <reaction evidence="1">
        <text>adenosine + H2O + H(+) = inosine + NH4(+)</text>
        <dbReference type="Rhea" id="RHEA:24408"/>
        <dbReference type="ChEBI" id="CHEBI:15377"/>
        <dbReference type="ChEBI" id="CHEBI:15378"/>
        <dbReference type="ChEBI" id="CHEBI:16335"/>
        <dbReference type="ChEBI" id="CHEBI:17596"/>
        <dbReference type="ChEBI" id="CHEBI:28938"/>
        <dbReference type="EC" id="3.5.4.4"/>
    </reaction>
    <physiologicalReaction direction="left-to-right" evidence="1">
        <dbReference type="Rhea" id="RHEA:24409"/>
    </physiologicalReaction>
</comment>
<comment type="catalytic activity">
    <reaction evidence="1">
        <text>2'-deoxyadenosine + H2O + H(+) = 2'-deoxyinosine + NH4(+)</text>
        <dbReference type="Rhea" id="RHEA:28190"/>
        <dbReference type="ChEBI" id="CHEBI:15377"/>
        <dbReference type="ChEBI" id="CHEBI:15378"/>
        <dbReference type="ChEBI" id="CHEBI:17256"/>
        <dbReference type="ChEBI" id="CHEBI:28938"/>
        <dbReference type="ChEBI" id="CHEBI:28997"/>
        <dbReference type="EC" id="3.5.4.4"/>
    </reaction>
    <physiologicalReaction direction="left-to-right" evidence="1">
        <dbReference type="Rhea" id="RHEA:28191"/>
    </physiologicalReaction>
</comment>
<comment type="cofactor">
    <cofactor evidence="1">
        <name>Zn(2+)</name>
        <dbReference type="ChEBI" id="CHEBI:29105"/>
    </cofactor>
    <text evidence="1">Binds 1 zinc ion per subunit.</text>
</comment>
<comment type="similarity">
    <text evidence="1">Belongs to the metallo-dependent hydrolases superfamily. Adenosine and AMP deaminases family. Adenosine deaminase subfamily.</text>
</comment>
<evidence type="ECO:0000255" key="1">
    <source>
        <dbReference type="HAMAP-Rule" id="MF_00540"/>
    </source>
</evidence>
<gene>
    <name evidence="1" type="primary">add</name>
    <name type="ordered locus">UTI89_C1811</name>
</gene>
<reference key="1">
    <citation type="journal article" date="2006" name="Proc. Natl. Acad. Sci. U.S.A.">
        <title>Identification of genes subject to positive selection in uropathogenic strains of Escherichia coli: a comparative genomics approach.</title>
        <authorList>
            <person name="Chen S.L."/>
            <person name="Hung C.-S."/>
            <person name="Xu J."/>
            <person name="Reigstad C.S."/>
            <person name="Magrini V."/>
            <person name="Sabo A."/>
            <person name="Blasiar D."/>
            <person name="Bieri T."/>
            <person name="Meyer R.R."/>
            <person name="Ozersky P."/>
            <person name="Armstrong J.R."/>
            <person name="Fulton R.S."/>
            <person name="Latreille J.P."/>
            <person name="Spieth J."/>
            <person name="Hooton T.M."/>
            <person name="Mardis E.R."/>
            <person name="Hultgren S.J."/>
            <person name="Gordon J.I."/>
        </authorList>
    </citation>
    <scope>NUCLEOTIDE SEQUENCE [LARGE SCALE GENOMIC DNA]</scope>
    <source>
        <strain>UTI89 / UPEC</strain>
    </source>
</reference>
<feature type="chain" id="PRO_1000017661" description="Adenosine deaminase">
    <location>
        <begin position="1"/>
        <end position="333"/>
    </location>
</feature>
<feature type="active site" description="Proton donor" evidence="1">
    <location>
        <position position="200"/>
    </location>
</feature>
<feature type="binding site" evidence="1">
    <location>
        <position position="12"/>
    </location>
    <ligand>
        <name>Zn(2+)</name>
        <dbReference type="ChEBI" id="CHEBI:29105"/>
        <note>catalytic</note>
    </ligand>
</feature>
<feature type="binding site" evidence="1">
    <location>
        <position position="14"/>
    </location>
    <ligand>
        <name>substrate</name>
    </ligand>
</feature>
<feature type="binding site" evidence="1">
    <location>
        <position position="14"/>
    </location>
    <ligand>
        <name>Zn(2+)</name>
        <dbReference type="ChEBI" id="CHEBI:29105"/>
        <note>catalytic</note>
    </ligand>
</feature>
<feature type="binding site" evidence="1">
    <location>
        <position position="16"/>
    </location>
    <ligand>
        <name>substrate</name>
    </ligand>
</feature>
<feature type="binding site" evidence="1">
    <location>
        <position position="170"/>
    </location>
    <ligand>
        <name>substrate</name>
    </ligand>
</feature>
<feature type="binding site" evidence="1">
    <location>
        <position position="197"/>
    </location>
    <ligand>
        <name>Zn(2+)</name>
        <dbReference type="ChEBI" id="CHEBI:29105"/>
        <note>catalytic</note>
    </ligand>
</feature>
<feature type="binding site" evidence="1">
    <location>
        <position position="278"/>
    </location>
    <ligand>
        <name>Zn(2+)</name>
        <dbReference type="ChEBI" id="CHEBI:29105"/>
        <note>catalytic</note>
    </ligand>
</feature>
<feature type="binding site" evidence="1">
    <location>
        <position position="279"/>
    </location>
    <ligand>
        <name>substrate</name>
    </ligand>
</feature>
<feature type="site" description="Important for catalytic activity" evidence="1">
    <location>
        <position position="221"/>
    </location>
</feature>
<name>ADD_ECOUT</name>